<keyword id="KW-0021">Allosteric enzyme</keyword>
<keyword id="KW-0328">Glycosyltransferase</keyword>
<keyword id="KW-0342">GTP-binding</keyword>
<keyword id="KW-0460">Magnesium</keyword>
<keyword id="KW-0547">Nucleotide-binding</keyword>
<keyword id="KW-0808">Transferase</keyword>
<sequence length="209" mass="22869">MSKVTQIAHPLILHKLALIRDKNTGSKDFRELVEEVAMLMAYEVTRDLQLKEVEIETPICKTKCKMLSGKKVAIVPILRAGLGMVGGMTSLIPAAKVGHIGLYRDEETLKPVEYFCKLPQDIGDRDVIVTDPMLATGGSAKDAITLLKQKGAKHIRLMCLVAAPEGIKEVMDEHPDVDIYVASVDEKLNEKGYVVPGLGDAGDRLYGTK</sequence>
<comment type="function">
    <text evidence="1">Catalyzes the conversion of uracil and 5-phospho-alpha-D-ribose 1-diphosphate (PRPP) to UMP and diphosphate.</text>
</comment>
<comment type="catalytic activity">
    <reaction evidence="1">
        <text>UMP + diphosphate = 5-phospho-alpha-D-ribose 1-diphosphate + uracil</text>
        <dbReference type="Rhea" id="RHEA:13017"/>
        <dbReference type="ChEBI" id="CHEBI:17568"/>
        <dbReference type="ChEBI" id="CHEBI:33019"/>
        <dbReference type="ChEBI" id="CHEBI:57865"/>
        <dbReference type="ChEBI" id="CHEBI:58017"/>
        <dbReference type="EC" id="2.4.2.9"/>
    </reaction>
</comment>
<comment type="cofactor">
    <cofactor evidence="1">
        <name>Mg(2+)</name>
        <dbReference type="ChEBI" id="CHEBI:18420"/>
    </cofactor>
    <text evidence="1">Binds 1 Mg(2+) ion per subunit. The magnesium is bound as Mg-PRPP.</text>
</comment>
<comment type="activity regulation">
    <text evidence="1">Allosterically activated by GTP.</text>
</comment>
<comment type="pathway">
    <text evidence="1">Pyrimidine metabolism; UMP biosynthesis via salvage pathway; UMP from uracil: step 1/1.</text>
</comment>
<comment type="similarity">
    <text evidence="1">Belongs to the UPRTase family.</text>
</comment>
<proteinExistence type="inferred from homology"/>
<gene>
    <name evidence="1" type="primary">upp</name>
    <name type="ordered locus">CLD_0641</name>
</gene>
<feature type="chain" id="PRO_1000139109" description="Uracil phosphoribosyltransferase">
    <location>
        <begin position="1"/>
        <end position="209"/>
    </location>
</feature>
<feature type="binding site" evidence="1">
    <location>
        <position position="79"/>
    </location>
    <ligand>
        <name>5-phospho-alpha-D-ribose 1-diphosphate</name>
        <dbReference type="ChEBI" id="CHEBI:58017"/>
    </ligand>
</feature>
<feature type="binding site" evidence="1">
    <location>
        <position position="104"/>
    </location>
    <ligand>
        <name>5-phospho-alpha-D-ribose 1-diphosphate</name>
        <dbReference type="ChEBI" id="CHEBI:58017"/>
    </ligand>
</feature>
<feature type="binding site" evidence="1">
    <location>
        <begin position="131"/>
        <end position="139"/>
    </location>
    <ligand>
        <name>5-phospho-alpha-D-ribose 1-diphosphate</name>
        <dbReference type="ChEBI" id="CHEBI:58017"/>
    </ligand>
</feature>
<feature type="binding site" evidence="1">
    <location>
        <position position="194"/>
    </location>
    <ligand>
        <name>uracil</name>
        <dbReference type="ChEBI" id="CHEBI:17568"/>
    </ligand>
</feature>
<feature type="binding site" evidence="1">
    <location>
        <begin position="199"/>
        <end position="201"/>
    </location>
    <ligand>
        <name>uracil</name>
        <dbReference type="ChEBI" id="CHEBI:17568"/>
    </ligand>
</feature>
<feature type="binding site" evidence="1">
    <location>
        <position position="200"/>
    </location>
    <ligand>
        <name>5-phospho-alpha-D-ribose 1-diphosphate</name>
        <dbReference type="ChEBI" id="CHEBI:58017"/>
    </ligand>
</feature>
<protein>
    <recommendedName>
        <fullName evidence="1">Uracil phosphoribosyltransferase</fullName>
        <ecNumber evidence="1">2.4.2.9</ecNumber>
    </recommendedName>
    <alternativeName>
        <fullName evidence="1">UMP pyrophosphorylase</fullName>
    </alternativeName>
    <alternativeName>
        <fullName evidence="1">UPRTase</fullName>
    </alternativeName>
</protein>
<organism>
    <name type="scientific">Clostridium botulinum (strain Okra / Type B1)</name>
    <dbReference type="NCBI Taxonomy" id="498213"/>
    <lineage>
        <taxon>Bacteria</taxon>
        <taxon>Bacillati</taxon>
        <taxon>Bacillota</taxon>
        <taxon>Clostridia</taxon>
        <taxon>Eubacteriales</taxon>
        <taxon>Clostridiaceae</taxon>
        <taxon>Clostridium</taxon>
    </lineage>
</organism>
<reference key="1">
    <citation type="journal article" date="2007" name="PLoS ONE">
        <title>Analysis of the neurotoxin complex genes in Clostridium botulinum A1-A4 and B1 strains: BoNT/A3, /Ba4 and /B1 clusters are located within plasmids.</title>
        <authorList>
            <person name="Smith T.J."/>
            <person name="Hill K.K."/>
            <person name="Foley B.T."/>
            <person name="Detter J.C."/>
            <person name="Munk A.C."/>
            <person name="Bruce D.C."/>
            <person name="Doggett N.A."/>
            <person name="Smith L.A."/>
            <person name="Marks J.D."/>
            <person name="Xie G."/>
            <person name="Brettin T.S."/>
        </authorList>
    </citation>
    <scope>NUCLEOTIDE SEQUENCE [LARGE SCALE GENOMIC DNA]</scope>
    <source>
        <strain>Okra / Type B1</strain>
    </source>
</reference>
<accession>B1IE69</accession>
<name>UPP_CLOBK</name>
<evidence type="ECO:0000255" key="1">
    <source>
        <dbReference type="HAMAP-Rule" id="MF_01218"/>
    </source>
</evidence>
<dbReference type="EC" id="2.4.2.9" evidence="1"/>
<dbReference type="EMBL" id="CP000939">
    <property type="protein sequence ID" value="ACA43859.1"/>
    <property type="molecule type" value="Genomic_DNA"/>
</dbReference>
<dbReference type="RefSeq" id="WP_003360558.1">
    <property type="nucleotide sequence ID" value="NC_010516.1"/>
</dbReference>
<dbReference type="SMR" id="B1IE69"/>
<dbReference type="GeneID" id="5184400"/>
<dbReference type="KEGG" id="cbb:CLD_0641"/>
<dbReference type="HOGENOM" id="CLU_067096_2_2_9"/>
<dbReference type="UniPathway" id="UPA00574">
    <property type="reaction ID" value="UER00636"/>
</dbReference>
<dbReference type="Proteomes" id="UP000008541">
    <property type="component" value="Chromosome"/>
</dbReference>
<dbReference type="GO" id="GO:0005525">
    <property type="term" value="F:GTP binding"/>
    <property type="evidence" value="ECO:0007669"/>
    <property type="project" value="UniProtKB-KW"/>
</dbReference>
<dbReference type="GO" id="GO:0000287">
    <property type="term" value="F:magnesium ion binding"/>
    <property type="evidence" value="ECO:0007669"/>
    <property type="project" value="UniProtKB-UniRule"/>
</dbReference>
<dbReference type="GO" id="GO:0004845">
    <property type="term" value="F:uracil phosphoribosyltransferase activity"/>
    <property type="evidence" value="ECO:0007669"/>
    <property type="project" value="UniProtKB-UniRule"/>
</dbReference>
<dbReference type="GO" id="GO:0044206">
    <property type="term" value="P:UMP salvage"/>
    <property type="evidence" value="ECO:0007669"/>
    <property type="project" value="UniProtKB-UniRule"/>
</dbReference>
<dbReference type="GO" id="GO:0006223">
    <property type="term" value="P:uracil salvage"/>
    <property type="evidence" value="ECO:0007669"/>
    <property type="project" value="InterPro"/>
</dbReference>
<dbReference type="CDD" id="cd06223">
    <property type="entry name" value="PRTases_typeI"/>
    <property type="match status" value="1"/>
</dbReference>
<dbReference type="FunFam" id="3.40.50.2020:FF:000003">
    <property type="entry name" value="Uracil phosphoribosyltransferase"/>
    <property type="match status" value="1"/>
</dbReference>
<dbReference type="Gene3D" id="3.40.50.2020">
    <property type="match status" value="1"/>
</dbReference>
<dbReference type="HAMAP" id="MF_01218_B">
    <property type="entry name" value="Upp_B"/>
    <property type="match status" value="1"/>
</dbReference>
<dbReference type="InterPro" id="IPR000836">
    <property type="entry name" value="PRibTrfase_dom"/>
</dbReference>
<dbReference type="InterPro" id="IPR029057">
    <property type="entry name" value="PRTase-like"/>
</dbReference>
<dbReference type="InterPro" id="IPR034332">
    <property type="entry name" value="Upp_B"/>
</dbReference>
<dbReference type="InterPro" id="IPR050054">
    <property type="entry name" value="UPRTase/APRTase"/>
</dbReference>
<dbReference type="InterPro" id="IPR005765">
    <property type="entry name" value="Ura_phspho_trans"/>
</dbReference>
<dbReference type="NCBIfam" id="NF001097">
    <property type="entry name" value="PRK00129.1"/>
    <property type="match status" value="1"/>
</dbReference>
<dbReference type="NCBIfam" id="TIGR01091">
    <property type="entry name" value="upp"/>
    <property type="match status" value="1"/>
</dbReference>
<dbReference type="PANTHER" id="PTHR32315">
    <property type="entry name" value="ADENINE PHOSPHORIBOSYLTRANSFERASE"/>
    <property type="match status" value="1"/>
</dbReference>
<dbReference type="PANTHER" id="PTHR32315:SF4">
    <property type="entry name" value="URACIL PHOSPHORIBOSYLTRANSFERASE, CHLOROPLASTIC"/>
    <property type="match status" value="1"/>
</dbReference>
<dbReference type="Pfam" id="PF14681">
    <property type="entry name" value="UPRTase"/>
    <property type="match status" value="1"/>
</dbReference>
<dbReference type="SUPFAM" id="SSF53271">
    <property type="entry name" value="PRTase-like"/>
    <property type="match status" value="1"/>
</dbReference>